<dbReference type="EC" id="3.1.-.-" evidence="1"/>
<dbReference type="EMBL" id="CP000932">
    <property type="protein sequence ID" value="ACM64269.1"/>
    <property type="molecule type" value="Genomic_DNA"/>
</dbReference>
<dbReference type="SMR" id="B9KCI0"/>
<dbReference type="STRING" id="306263.Cla_0945"/>
<dbReference type="KEGG" id="cla:CLA_0945"/>
<dbReference type="PATRIC" id="fig|306263.5.peg.929"/>
<dbReference type="eggNOG" id="COG0816">
    <property type="taxonomic scope" value="Bacteria"/>
</dbReference>
<dbReference type="HOGENOM" id="CLU_098240_2_2_7"/>
<dbReference type="Proteomes" id="UP000007727">
    <property type="component" value="Chromosome"/>
</dbReference>
<dbReference type="GO" id="GO:0005829">
    <property type="term" value="C:cytosol"/>
    <property type="evidence" value="ECO:0007669"/>
    <property type="project" value="TreeGrafter"/>
</dbReference>
<dbReference type="GO" id="GO:0004518">
    <property type="term" value="F:nuclease activity"/>
    <property type="evidence" value="ECO:0007669"/>
    <property type="project" value="UniProtKB-KW"/>
</dbReference>
<dbReference type="GO" id="GO:0000967">
    <property type="term" value="P:rRNA 5'-end processing"/>
    <property type="evidence" value="ECO:0007669"/>
    <property type="project" value="UniProtKB-UniRule"/>
</dbReference>
<dbReference type="CDD" id="cd16964">
    <property type="entry name" value="YqgF"/>
    <property type="match status" value="1"/>
</dbReference>
<dbReference type="Gene3D" id="3.30.420.140">
    <property type="entry name" value="YqgF/RNase H-like domain"/>
    <property type="match status" value="1"/>
</dbReference>
<dbReference type="HAMAP" id="MF_00651">
    <property type="entry name" value="Nuclease_YqgF"/>
    <property type="match status" value="1"/>
</dbReference>
<dbReference type="InterPro" id="IPR012337">
    <property type="entry name" value="RNaseH-like_sf"/>
</dbReference>
<dbReference type="InterPro" id="IPR005227">
    <property type="entry name" value="YqgF"/>
</dbReference>
<dbReference type="InterPro" id="IPR006641">
    <property type="entry name" value="YqgF/RNaseH-like_dom"/>
</dbReference>
<dbReference type="InterPro" id="IPR037027">
    <property type="entry name" value="YqgF/RNaseH-like_dom_sf"/>
</dbReference>
<dbReference type="NCBIfam" id="NF001026">
    <property type="entry name" value="PRK00109.2-2"/>
    <property type="match status" value="1"/>
</dbReference>
<dbReference type="NCBIfam" id="TIGR00250">
    <property type="entry name" value="RNAse_H_YqgF"/>
    <property type="match status" value="1"/>
</dbReference>
<dbReference type="PANTHER" id="PTHR33317">
    <property type="entry name" value="POLYNUCLEOTIDYL TRANSFERASE, RIBONUCLEASE H-LIKE SUPERFAMILY PROTEIN"/>
    <property type="match status" value="1"/>
</dbReference>
<dbReference type="PANTHER" id="PTHR33317:SF4">
    <property type="entry name" value="POLYNUCLEOTIDYL TRANSFERASE, RIBONUCLEASE H-LIKE SUPERFAMILY PROTEIN"/>
    <property type="match status" value="1"/>
</dbReference>
<dbReference type="Pfam" id="PF03652">
    <property type="entry name" value="RuvX"/>
    <property type="match status" value="1"/>
</dbReference>
<dbReference type="SMART" id="SM00732">
    <property type="entry name" value="YqgFc"/>
    <property type="match status" value="1"/>
</dbReference>
<dbReference type="SUPFAM" id="SSF53098">
    <property type="entry name" value="Ribonuclease H-like"/>
    <property type="match status" value="1"/>
</dbReference>
<sequence length="128" mass="14406">MKTLALDIGLKRIGVALCVNKSIAMPLEAIIRKNRNQAANEVKKYIKEYDVNTLVVGVPLGGSSEDEMRKRVEHFISLLDFDKEVFFVDESFSSKNAQELGMVNLKKKDGKLDSLAAYLFLKDFYGLT</sequence>
<evidence type="ECO:0000255" key="1">
    <source>
        <dbReference type="HAMAP-Rule" id="MF_00651"/>
    </source>
</evidence>
<keyword id="KW-0963">Cytoplasm</keyword>
<keyword id="KW-0378">Hydrolase</keyword>
<keyword id="KW-0540">Nuclease</keyword>
<keyword id="KW-1185">Reference proteome</keyword>
<keyword id="KW-0690">Ribosome biogenesis</keyword>
<proteinExistence type="inferred from homology"/>
<name>YQGF_CAMLR</name>
<feature type="chain" id="PRO_1000147468" description="Putative pre-16S rRNA nuclease">
    <location>
        <begin position="1"/>
        <end position="128"/>
    </location>
</feature>
<protein>
    <recommendedName>
        <fullName evidence="1">Putative pre-16S rRNA nuclease</fullName>
        <ecNumber evidence="1">3.1.-.-</ecNumber>
    </recommendedName>
</protein>
<accession>B9KCI0</accession>
<organism>
    <name type="scientific">Campylobacter lari (strain RM2100 / D67 / ATCC BAA-1060)</name>
    <dbReference type="NCBI Taxonomy" id="306263"/>
    <lineage>
        <taxon>Bacteria</taxon>
        <taxon>Pseudomonadati</taxon>
        <taxon>Campylobacterota</taxon>
        <taxon>Epsilonproteobacteria</taxon>
        <taxon>Campylobacterales</taxon>
        <taxon>Campylobacteraceae</taxon>
        <taxon>Campylobacter</taxon>
    </lineage>
</organism>
<comment type="function">
    <text evidence="1">Could be a nuclease involved in processing of the 5'-end of pre-16S rRNA.</text>
</comment>
<comment type="subcellular location">
    <subcellularLocation>
        <location evidence="1">Cytoplasm</location>
    </subcellularLocation>
</comment>
<comment type="similarity">
    <text evidence="1">Belongs to the YqgF nuclease family.</text>
</comment>
<reference key="1">
    <citation type="journal article" date="2008" name="Foodborne Pathog. Dis.">
        <title>The complete genome sequence and analysis of the human pathogen Campylobacter lari.</title>
        <authorList>
            <person name="Miller W.G."/>
            <person name="Wang G."/>
            <person name="Binnewies T.T."/>
            <person name="Parker C.T."/>
        </authorList>
    </citation>
    <scope>NUCLEOTIDE SEQUENCE [LARGE SCALE GENOMIC DNA]</scope>
    <source>
        <strain>RM2100 / D67 / ATCC BAA-1060</strain>
    </source>
</reference>
<gene>
    <name type="ordered locus">Cla_0945</name>
</gene>